<organism>
    <name type="scientific">Homo sapiens</name>
    <name type="common">Human</name>
    <dbReference type="NCBI Taxonomy" id="9606"/>
    <lineage>
        <taxon>Eukaryota</taxon>
        <taxon>Metazoa</taxon>
        <taxon>Chordata</taxon>
        <taxon>Craniata</taxon>
        <taxon>Vertebrata</taxon>
        <taxon>Euteleostomi</taxon>
        <taxon>Mammalia</taxon>
        <taxon>Eutheria</taxon>
        <taxon>Euarchontoglires</taxon>
        <taxon>Primates</taxon>
        <taxon>Haplorrhini</taxon>
        <taxon>Catarrhini</taxon>
        <taxon>Hominidae</taxon>
        <taxon>Homo</taxon>
    </lineage>
</organism>
<feature type="transit peptide" description="Mitochondrion" evidence="11">
    <location>
        <begin position="1"/>
        <end position="22"/>
    </location>
</feature>
<feature type="chain" id="PRO_0000000291" description="Methylcrotonoyl-CoA carboxylase beta chain, mitochondrial">
    <location>
        <begin position="23"/>
        <end position="563"/>
    </location>
</feature>
<feature type="domain" description="CoA carboxyltransferase N-terminal" evidence="3">
    <location>
        <begin position="49"/>
        <end position="306"/>
    </location>
</feature>
<feature type="domain" description="CoA carboxyltransferase C-terminal" evidence="4">
    <location>
        <begin position="309"/>
        <end position="555"/>
    </location>
</feature>
<feature type="region of interest" description="Carboxyltransferase" evidence="5">
    <location>
        <begin position="49"/>
        <end position="555"/>
    </location>
</feature>
<feature type="region of interest" description="Acyl-CoA binding" evidence="2">
    <location>
        <begin position="343"/>
        <end position="372"/>
    </location>
</feature>
<feature type="modified residue" description="N6-acetyllysine; alternate" evidence="1">
    <location>
        <position position="70"/>
    </location>
</feature>
<feature type="modified residue" description="N6-succinyllysine; alternate" evidence="1">
    <location>
        <position position="70"/>
    </location>
</feature>
<feature type="modified residue" description="N6-succinyllysine" evidence="1">
    <location>
        <position position="141"/>
    </location>
</feature>
<feature type="modified residue" description="N6-acetyllysine; alternate" evidence="1">
    <location>
        <position position="495"/>
    </location>
</feature>
<feature type="modified residue" description="N6-succinyllysine; alternate" evidence="1">
    <location>
        <position position="495"/>
    </location>
</feature>
<feature type="modified residue" description="N6-acetyllysine" evidence="1">
    <location>
        <position position="511"/>
    </location>
</feature>
<feature type="splice variant" id="VSP_000069" description="In isoform 2." evidence="20">
    <location>
        <begin position="209"/>
        <end position="246"/>
    </location>
</feature>
<feature type="sequence variant" id="VAR_072507" description="In MCC2D; has some wild-type residual activity; dbSNP:rs398124371." evidence="17">
    <original>S</original>
    <variation>F</variation>
    <location>
        <position position="39"/>
    </location>
</feature>
<feature type="sequence variant" id="VAR_077291" description="In MCC2D; uncertain significance; dbSNP:rs1187203558." evidence="19">
    <original>G</original>
    <variation>V</variation>
    <location>
        <position position="68"/>
    </location>
</feature>
<feature type="sequence variant" id="VAR_012792" description="In MCC2D; severe and mild form; dbSNP:rs119103219." evidence="7 10 17">
    <original>E</original>
    <variation>Q</variation>
    <location>
        <position position="99"/>
    </location>
</feature>
<feature type="sequence variant" id="VAR_072508" description="In MCC2D; dbSNP:rs748028684." evidence="17">
    <original>S</original>
    <variation>F</variation>
    <location>
        <position position="101"/>
    </location>
</feature>
<feature type="sequence variant" id="VAR_077292" description="In MCC2D; uncertain significance." evidence="19">
    <original>G</original>
    <variation>R</variation>
    <location>
        <position position="105"/>
    </location>
</feature>
<feature type="sequence variant" id="VAR_072509" description="In MCC2D; has some wild-type residual activity." evidence="17">
    <location>
        <position position="118"/>
    </location>
</feature>
<feature type="sequence variant" id="VAR_072510" description="In MCC2D." evidence="17">
    <original>C</original>
    <variation>F</variation>
    <location>
        <position position="131"/>
    </location>
</feature>
<feature type="sequence variant" id="VAR_077293" description="In MCC2D." evidence="18">
    <original>T</original>
    <variation>I</variation>
    <location>
        <position position="139"/>
    </location>
</feature>
<feature type="sequence variant" id="VAR_072511" description="In MCC2D; has some wild-type residual activity." evidence="17">
    <original>Y</original>
    <variation>N</variation>
    <location>
        <position position="146"/>
    </location>
</feature>
<feature type="sequence variant" id="VAR_072512" description="In MCC2D; dbSNP:rs1554134065." evidence="17">
    <original>K</original>
    <variation>T</variation>
    <location>
        <position position="152"/>
    </location>
</feature>
<feature type="sequence variant" id="VAR_012793" description="In MCC2D; mild form; dbSNP:rs119103220." evidence="7 10">
    <original>R</original>
    <variation>Q</variation>
    <location>
        <position position="155"/>
    </location>
</feature>
<feature type="sequence variant" id="VAR_072513" description="In MCC2D; dbSNP:rs141030969." evidence="10 17 19">
    <original>R</original>
    <variation>W</variation>
    <location>
        <position position="155"/>
    </location>
</feature>
<feature type="sequence variant" id="VAR_077294" description="In MCC2D; uncertain significance." evidence="19">
    <original>N</original>
    <variation>D</variation>
    <location>
        <position position="163"/>
    </location>
</feature>
<feature type="sequence variant" id="VAR_012794" description="In MCC2D; dbSNP:rs119103222." evidence="6 17">
    <original>C</original>
    <variation>R</variation>
    <location>
        <position position="167"/>
    </location>
</feature>
<feature type="sequence variant" id="VAR_072514" description="In MCC2D." evidence="17">
    <original>Y</original>
    <variation>D</variation>
    <location>
        <position position="169"/>
    </location>
</feature>
<feature type="sequence variant" id="VAR_012795" description="In MCC2D; severe form; dbSNP:rs752866557." evidence="7 17">
    <original>S</original>
    <variation>L</variation>
    <location>
        <position position="173"/>
    </location>
</feature>
<feature type="sequence variant" id="VAR_072515" description="In MCC2D; dbSNP:rs119103225." evidence="13 17">
    <original>H</original>
    <variation>R</variation>
    <location>
        <position position="190"/>
    </location>
</feature>
<feature type="sequence variant" id="VAR_072516" description="In MCC2D; produces severely decreased wild-type residual activity; dbSNP:rs773774134." evidence="10 17">
    <original>H</original>
    <variation>Y</variation>
    <location>
        <position position="190"/>
    </location>
</feature>
<feature type="sequence variant" id="VAR_012796" description="In MCC2D; mild form; dbSNP:rs547662164." evidence="7 17">
    <original>R</original>
    <variation>C</variation>
    <location>
        <position position="193"/>
    </location>
</feature>
<feature type="sequence variant" id="VAR_072517" description="In MCC2D; dbSNP:rs535519604." evidence="17">
    <original>R</original>
    <variation>H</variation>
    <location>
        <position position="193"/>
    </location>
</feature>
<feature type="sequence variant" id="VAR_072518" description="In MCC2D; uncertain significance; dbSNP:rs140806722." evidence="17 19">
    <original>I</original>
    <variation>N</variation>
    <location>
        <position position="200"/>
    </location>
</feature>
<feature type="sequence variant" id="VAR_077295" description="In MCC2D; dbSNP:rs277995." evidence="19">
    <original>G</original>
    <variation>A</variation>
    <location>
        <position position="214"/>
    </location>
</feature>
<feature type="sequence variant" id="VAR_077296" description="In MCC2D." evidence="19">
    <original>C</original>
    <variation>W</variation>
    <location>
        <position position="216"/>
    </location>
</feature>
<feature type="sequence variant" id="VAR_012797" description="In MCC2D; dbSNP:rs886043524." evidence="6 17 19">
    <original>A</original>
    <variation>T</variation>
    <location>
        <position position="218"/>
    </location>
</feature>
<feature type="sequence variant" id="VAR_072519" description="In MCC2D; dbSNP:rs760420191." evidence="13 16 17">
    <original>A</original>
    <variation>V</variation>
    <location>
        <position position="218"/>
    </location>
</feature>
<feature type="sequence variant" id="VAR_072520" description="In MCC2D; dbSNP:rs1254750166." evidence="17">
    <original>G</original>
    <variation>E</variation>
    <location>
        <position position="220"/>
    </location>
</feature>
<feature type="sequence variant" id="VAR_072521" description="In MCC2D; dbSNP:rs1195601465." evidence="17">
    <original>P</original>
    <variation>L</variation>
    <location>
        <position position="224"/>
    </location>
</feature>
<feature type="sequence variant" id="VAR_077297" description="In MCC2D; dbSNP:rs766753795." evidence="19">
    <original>N</original>
    <variation>D</variation>
    <location>
        <position position="230"/>
    </location>
</feature>
<feature type="sequence variant" id="VAR_072522" description="In MCC2D." evidence="17">
    <original>G</original>
    <variation>D</variation>
    <location>
        <position position="237"/>
    </location>
</feature>
<feature type="sequence variant" id="VAR_072523" description="In MCC2D." evidence="17">
    <original>H</original>
    <variation>L</variation>
    <location>
        <position position="266"/>
    </location>
</feature>
<feature type="sequence variant" id="VAR_012798" description="In MCC2D; asymptomatic form; dbSNP:rs119103223." evidence="8 10">
    <original>R</original>
    <variation>T</variation>
    <location>
        <position position="268"/>
    </location>
</feature>
<feature type="sequence variant" id="VAR_072524" description="In MCC2D." evidence="10">
    <location>
        <position position="268"/>
    </location>
</feature>
<feature type="sequence variant" id="VAR_067199" description="In MCC2D; dbSNP:rs119103226." evidence="13 15 17">
    <original>D</original>
    <variation>Y</variation>
    <location>
        <position position="280"/>
    </location>
</feature>
<feature type="sequence variant" id="VAR_072525" description="In MCC2D; has some wild-type residual activity." evidence="10 17">
    <original>H</original>
    <variation>R</variation>
    <location>
        <position position="282"/>
    </location>
</feature>
<feature type="sequence variant" id="VAR_012799" description="In MCC2D; mild form; dbSNP:rs119103221." evidence="7 10 17">
    <original>P</original>
    <variation>R</variation>
    <location>
        <position position="310"/>
    </location>
</feature>
<feature type="sequence variant" id="VAR_077298" description="In MCC2D; dbSNP:rs773115035." evidence="19">
    <original>Y</original>
    <variation>C</variation>
    <location>
        <position position="318"/>
    </location>
</feature>
<feature type="sequence variant" id="VAR_077299" description="In MCC2D; dbSNP:rs1443551700." evidence="18">
    <original>G</original>
    <variation>R</variation>
    <location>
        <position position="319"/>
    </location>
</feature>
<feature type="sequence variant" id="VAR_012800" description="In MCC2D; severe form; dbSNP:rs150591260." evidence="7 16 17 19">
    <original>V</original>
    <variation>M</variation>
    <location>
        <position position="339"/>
    </location>
</feature>
<feature type="sequence variant" id="VAR_072526" description="In MCC2D; dbSNP:rs398124370." evidence="17">
    <original>D</original>
    <variation>V</variation>
    <location>
        <position position="340"/>
    </location>
</feature>
<feature type="sequence variant" id="VAR_072527" description="In MCC2D; produces severely decreased wild-type residual activity; dbSNP:rs765438239." evidence="17">
    <original>G</original>
    <variation>R</variation>
    <location>
        <position position="352"/>
    </location>
</feature>
<feature type="sequence variant" id="VAR_072528" description="In MCC2D; dbSNP:rs757052602." evidence="14 17">
    <original>L</original>
    <variation>F</variation>
    <location>
        <position position="355"/>
    </location>
</feature>
<feature type="sequence variant" id="VAR_072529" description="In MCC2D." evidence="10 17">
    <original>V</original>
    <variation>F</variation>
    <location>
        <position position="375"/>
    </location>
</feature>
<feature type="sequence variant" id="VAR_077300" description="In MCC2D; uncertain significance; dbSNP:rs1450515408." evidence="19">
    <original>F</original>
    <variation>V</variation>
    <location>
        <position position="387"/>
    </location>
</feature>
<feature type="sequence variant" id="VAR_077301" description="In MCC2D; dbSNP:rs750782118." evidence="19">
    <original>Q</original>
    <variation>P</variation>
    <location>
        <position position="393"/>
    </location>
</feature>
<feature type="sequence variant" id="VAR_072530" description="In MCC2D; dbSNP:rs142887940." evidence="17">
    <original>N</original>
    <variation>T</variation>
    <location>
        <position position="403"/>
    </location>
</feature>
<feature type="sequence variant" id="VAR_077302" description="In MCC2D; dbSNP:rs771440617." evidence="19">
    <original>G</original>
    <variation>D</variation>
    <location>
        <position position="410"/>
    </location>
</feature>
<feature type="sequence variant" id="VAR_077303" description="In MCC2D." evidence="19">
    <original>G</original>
    <variation>R</variation>
    <location>
        <position position="410"/>
    </location>
</feature>
<feature type="sequence variant" id="VAR_072531" description="In MCC2D; has some wild-type residual activity; dbSNP:rs758506791." evidence="17">
    <original>V</original>
    <variation>L</variation>
    <location>
        <position position="434"/>
    </location>
</feature>
<feature type="sequence variant" id="VAR_012801" description="In MCC2D; mild form; dbSNP:rs119103224." evidence="9">
    <original>I</original>
    <variation>V</variation>
    <location>
        <position position="437"/>
    </location>
</feature>
<feature type="sequence variant" id="VAR_077304" description="In MCC2D; uncertain significance; dbSNP:rs139852818." evidence="19">
    <original>I</original>
    <variation>T</variation>
    <location>
        <position position="441"/>
    </location>
</feature>
<feature type="sequence variant" id="VAR_072532" description="In MCC2D; shows virtually no enzyme activity; dbSNP:rs727504011." evidence="10 17">
    <original>A</original>
    <variation>V</variation>
    <location>
        <position position="456"/>
    </location>
</feature>
<feature type="sequence variant" id="VAR_067200" description="In MCC2D; dbSNP:rs754741111." evidence="15">
    <original>P</original>
    <variation>S</variation>
    <location>
        <position position="459"/>
    </location>
</feature>
<feature type="sequence variant" id="VAR_077305" description="In MCC2D; dbSNP:rs1747390697." evidence="19">
    <original>F</original>
    <variation>V</variation>
    <location>
        <position position="461"/>
    </location>
</feature>
<feature type="sequence variant" id="VAR_072533" description="In MCC2D; has some wild-type residual activity; dbSNP:rs148773718." evidence="17 19">
    <original>G</original>
    <variation>R</variation>
    <location>
        <position position="475"/>
    </location>
</feature>
<feature type="sequence variant" id="VAR_072534" description="In MCC2D; dbSNP:rs769558016." evidence="14 17">
    <original>Q</original>
    <variation>R</variation>
    <location>
        <position position="477"/>
    </location>
</feature>
<feature type="sequence variant" id="VAR_038630" description="In dbSNP:rs35068278.">
    <original>A</original>
    <variation>G</variation>
    <location>
        <position position="478"/>
    </location>
</feature>
<feature type="sequence variant" id="VAR_072535" description="In MCC2D; dbSNP:rs979584886." evidence="14 17">
    <original>G</original>
    <variation>R</variation>
    <location>
        <position position="517"/>
    </location>
</feature>
<feature type="sequence variant" id="VAR_072536" description="In MCC2D; dbSNP:rs150327768." evidence="14 17">
    <original>Y</original>
    <variation>S</variation>
    <location>
        <position position="520"/>
    </location>
</feature>
<feature type="sequence variant" id="VAR_072537" description="In MCC2D; has some wild-type residual activity; dbSNP:rs1459143051." evidence="16 17">
    <original>S</original>
    <variation>G</variation>
    <location>
        <position position="523"/>
    </location>
</feature>
<feature type="sequence variant" id="VAR_077306" description="In MCC2D; dbSNP:rs774241918." evidence="19">
    <original>A</original>
    <variation>T</variation>
    <location>
        <position position="524"/>
    </location>
</feature>
<feature type="sequence variant" id="VAR_072538" description="In MCC2D; dbSNP:rs1257849672." evidence="17">
    <original>K</original>
    <variation>E</variation>
    <location>
        <position position="555"/>
    </location>
</feature>
<feature type="helix" evidence="24">
    <location>
        <begin position="40"/>
        <end position="65"/>
    </location>
</feature>
<feature type="helix" evidence="24">
    <location>
        <begin position="69"/>
        <end position="76"/>
    </location>
</feature>
<feature type="turn" evidence="24">
    <location>
        <begin position="77"/>
        <end position="79"/>
    </location>
</feature>
<feature type="helix" evidence="24">
    <location>
        <begin position="83"/>
        <end position="90"/>
    </location>
</feature>
<feature type="strand" evidence="24">
    <location>
        <begin position="98"/>
        <end position="100"/>
    </location>
</feature>
<feature type="turn" evidence="24">
    <location>
        <begin position="102"/>
        <end position="107"/>
    </location>
</feature>
<feature type="strand" evidence="24">
    <location>
        <begin position="109"/>
        <end position="111"/>
    </location>
</feature>
<feature type="helix" evidence="24">
    <location>
        <begin position="115"/>
        <end position="118"/>
    </location>
</feature>
<feature type="strand" evidence="24">
    <location>
        <begin position="119"/>
        <end position="126"/>
    </location>
</feature>
<feature type="strand" evidence="24">
    <location>
        <begin position="129"/>
        <end position="136"/>
    </location>
</feature>
<feature type="turn" evidence="23">
    <location>
        <begin position="138"/>
        <end position="140"/>
    </location>
</feature>
<feature type="helix" evidence="24">
    <location>
        <begin position="141"/>
        <end position="143"/>
    </location>
</feature>
<feature type="helix" evidence="24">
    <location>
        <begin position="147"/>
        <end position="163"/>
    </location>
</feature>
<feature type="strand" evidence="24">
    <location>
        <begin position="167"/>
        <end position="171"/>
    </location>
</feature>
<feature type="helix" evidence="25">
    <location>
        <begin position="178"/>
        <end position="180"/>
    </location>
</feature>
<feature type="helix" evidence="24">
    <location>
        <begin position="181"/>
        <end position="184"/>
    </location>
</feature>
<feature type="strand" evidence="24">
    <location>
        <begin position="185"/>
        <end position="187"/>
    </location>
</feature>
<feature type="helix" evidence="24">
    <location>
        <begin position="193"/>
        <end position="202"/>
    </location>
</feature>
<feature type="turn" evidence="24">
    <location>
        <begin position="203"/>
        <end position="205"/>
    </location>
</feature>
<feature type="strand" evidence="24">
    <location>
        <begin position="208"/>
        <end position="212"/>
    </location>
</feature>
<feature type="strand" evidence="24">
    <location>
        <begin position="214"/>
        <end position="217"/>
    </location>
</feature>
<feature type="turn" evidence="24">
    <location>
        <begin position="218"/>
        <end position="221"/>
    </location>
</feature>
<feature type="helix" evidence="24">
    <location>
        <begin position="222"/>
        <end position="225"/>
    </location>
</feature>
<feature type="strand" evidence="24">
    <location>
        <begin position="228"/>
        <end position="233"/>
    </location>
</feature>
<feature type="turn" evidence="24">
    <location>
        <begin position="234"/>
        <end position="236"/>
    </location>
</feature>
<feature type="strand" evidence="24">
    <location>
        <begin position="238"/>
        <end position="242"/>
    </location>
</feature>
<feature type="helix" evidence="24">
    <location>
        <begin position="244"/>
        <end position="250"/>
    </location>
</feature>
<feature type="helix" evidence="24">
    <location>
        <begin position="258"/>
        <end position="261"/>
    </location>
</feature>
<feature type="helix" evidence="24">
    <location>
        <begin position="263"/>
        <end position="268"/>
    </location>
</feature>
<feature type="strand" evidence="24">
    <location>
        <begin position="274"/>
        <end position="279"/>
    </location>
</feature>
<feature type="helix" evidence="24">
    <location>
        <begin position="280"/>
        <end position="292"/>
    </location>
</feature>
<feature type="helix" evidence="24">
    <location>
        <begin position="315"/>
        <end position="321"/>
    </location>
</feature>
<feature type="strand" evidence="24">
    <location>
        <begin position="325"/>
        <end position="327"/>
    </location>
</feature>
<feature type="helix" evidence="24">
    <location>
        <begin position="332"/>
        <end position="338"/>
    </location>
</feature>
<feature type="helix" evidence="24">
    <location>
        <begin position="340"/>
        <end position="342"/>
    </location>
</feature>
<feature type="strand" evidence="24">
    <location>
        <begin position="345"/>
        <end position="348"/>
    </location>
</feature>
<feature type="turn" evidence="24">
    <location>
        <begin position="351"/>
        <end position="354"/>
    </location>
</feature>
<feature type="strand" evidence="24">
    <location>
        <begin position="355"/>
        <end position="362"/>
    </location>
</feature>
<feature type="strand" evidence="24">
    <location>
        <begin position="365"/>
        <end position="372"/>
    </location>
</feature>
<feature type="strand" evidence="22">
    <location>
        <begin position="374"/>
        <end position="376"/>
    </location>
</feature>
<feature type="helix" evidence="24">
    <location>
        <begin position="378"/>
        <end position="393"/>
    </location>
</feature>
<feature type="strand" evidence="24">
    <location>
        <begin position="398"/>
        <end position="402"/>
    </location>
</feature>
<feature type="helix" evidence="24">
    <location>
        <begin position="411"/>
        <end position="416"/>
    </location>
</feature>
<feature type="helix" evidence="24">
    <location>
        <begin position="418"/>
        <end position="430"/>
    </location>
</feature>
<feature type="strand" evidence="24">
    <location>
        <begin position="436"/>
        <end position="440"/>
    </location>
</feature>
<feature type="strand" evidence="24">
    <location>
        <begin position="442"/>
        <end position="445"/>
    </location>
</feature>
<feature type="helix" evidence="24">
    <location>
        <begin position="448"/>
        <end position="451"/>
    </location>
</feature>
<feature type="helix" evidence="24">
    <location>
        <begin position="455"/>
        <end position="457"/>
    </location>
</feature>
<feature type="strand" evidence="24">
    <location>
        <begin position="460"/>
        <end position="464"/>
    </location>
</feature>
<feature type="strand" evidence="24">
    <location>
        <begin position="469"/>
        <end position="473"/>
    </location>
</feature>
<feature type="helix" evidence="24">
    <location>
        <begin position="475"/>
        <end position="493"/>
    </location>
</feature>
<feature type="helix" evidence="24">
    <location>
        <begin position="499"/>
        <end position="515"/>
    </location>
</feature>
<feature type="helix" evidence="24">
    <location>
        <begin position="519"/>
        <end position="524"/>
    </location>
</feature>
<feature type="strand" evidence="24">
    <location>
        <begin position="527"/>
        <end position="529"/>
    </location>
</feature>
<feature type="turn" evidence="24">
    <location>
        <begin position="534"/>
        <end position="536"/>
    </location>
</feature>
<feature type="helix" evidence="24">
    <location>
        <begin position="537"/>
        <end position="548"/>
    </location>
</feature>
<accession>Q9HCC0</accession>
<accession>A6NIY9</accession>
<accession>Q96C27</accession>
<accession>Q9Y4L7</accession>
<gene>
    <name type="primary">MCCC2</name>
    <name type="synonym">MCCB</name>
</gene>
<reference key="1">
    <citation type="submission" date="2000-10" db="EMBL/GenBank/DDBJ databases">
        <title>Human non-biotin containing subunit gene of 3-methylcrotonyl-CoA carboxylase (MCCB).</title>
        <authorList>
            <person name="Fukuda T."/>
            <person name="Otsuka H."/>
            <person name="Morishita R."/>
            <person name="Takemoto Y."/>
            <person name="Sone M."/>
            <person name="Nakao M."/>
            <person name="Abe S."/>
            <person name="Kondo I."/>
        </authorList>
    </citation>
    <scope>NUCLEOTIDE SEQUENCE [GENOMIC DNA / MRNA] (ISOFORM 1)</scope>
</reference>
<reference key="2">
    <citation type="journal article" date="2001" name="Am. J. Hum. Genet.">
        <title>The molecular basis of 3-methylcrotonylglycinuria, a disorder of leucine catabolism.</title>
        <authorList>
            <person name="Gallardo M.E."/>
            <person name="Desviat L.R."/>
            <person name="Rodriguez J.M."/>
            <person name="Esparza-Gordillo J."/>
            <person name="Perez-Cerda C."/>
            <person name="Perez B."/>
            <person name="Rodriguez-Pombo P."/>
            <person name="Criado O."/>
            <person name="Sanz R."/>
            <person name="Morton D.H."/>
            <person name="Gibson K.M."/>
            <person name="Le T.P."/>
            <person name="Ribes A."/>
            <person name="Rodriguez de Cordoba S."/>
            <person name="Ugarte M."/>
            <person name="Penalva M.A."/>
        </authorList>
    </citation>
    <scope>NUCLEOTIDE SEQUENCE [MRNA] (ISOFORM 1)</scope>
    <scope>SUBCELLULAR LOCATION</scope>
    <scope>VARIANTS MCC2D ARG-167 AND THR-218</scope>
</reference>
<reference key="3">
    <citation type="journal article" date="2001" name="J. Clin. Invest.">
        <title>The molecular basis of human 3-methylcrotonyl-CoA carboxylase deficiency.</title>
        <authorList>
            <person name="Baumgartner M.R."/>
            <person name="Almashanu S."/>
            <person name="Suormala T."/>
            <person name="Obie C."/>
            <person name="Cole R.N."/>
            <person name="Packman S."/>
            <person name="Baumgartner E.R."/>
            <person name="Valle D."/>
        </authorList>
    </citation>
    <scope>NUCLEOTIDE SEQUENCE [MRNA] (ISOFORM 1)</scope>
    <scope>VARIANTS MCC2D GLN-99; GLN-155; LEU-173; CYS-193; ARG-310 AND MET-339</scope>
</reference>
<reference key="4">
    <citation type="journal article" date="2001" name="Hum. Mol. Genet.">
        <title>Cloning of the human MCCA and MCCB genes and mutations therein reveal the molecular cause of 3-methylcrotonyl-CoA: carboxylase deficiency.</title>
        <authorList>
            <person name="Holzinger A."/>
            <person name="Roeschinger W."/>
            <person name="Lagler F."/>
            <person name="Mayerhofer P.U."/>
            <person name="Lichtner P."/>
            <person name="Kattenfeld T."/>
            <person name="Thuy L.P."/>
            <person name="Nyhan W.L."/>
            <person name="Koch H.G."/>
            <person name="Muntau A.C."/>
            <person name="Roscher A.A."/>
        </authorList>
    </citation>
    <scope>NUCLEOTIDE SEQUENCE [MRNA] (ISOFORM 1)</scope>
    <scope>VARIANT MCC2D THR-268</scope>
</reference>
<reference key="5">
    <citation type="journal article" date="2004" name="Nature">
        <title>The DNA sequence and comparative analysis of human chromosome 5.</title>
        <authorList>
            <person name="Schmutz J."/>
            <person name="Martin J."/>
            <person name="Terry A."/>
            <person name="Couronne O."/>
            <person name="Grimwood J."/>
            <person name="Lowry S."/>
            <person name="Gordon L.A."/>
            <person name="Scott D."/>
            <person name="Xie G."/>
            <person name="Huang W."/>
            <person name="Hellsten U."/>
            <person name="Tran-Gyamfi M."/>
            <person name="She X."/>
            <person name="Prabhakar S."/>
            <person name="Aerts A."/>
            <person name="Altherr M."/>
            <person name="Bajorek E."/>
            <person name="Black S."/>
            <person name="Branscomb E."/>
            <person name="Caoile C."/>
            <person name="Challacombe J.F."/>
            <person name="Chan Y.M."/>
            <person name="Denys M."/>
            <person name="Detter J.C."/>
            <person name="Escobar J."/>
            <person name="Flowers D."/>
            <person name="Fotopulos D."/>
            <person name="Glavina T."/>
            <person name="Gomez M."/>
            <person name="Gonzales E."/>
            <person name="Goodstein D."/>
            <person name="Grigoriev I."/>
            <person name="Groza M."/>
            <person name="Hammon N."/>
            <person name="Hawkins T."/>
            <person name="Haydu L."/>
            <person name="Israni S."/>
            <person name="Jett J."/>
            <person name="Kadner K."/>
            <person name="Kimball H."/>
            <person name="Kobayashi A."/>
            <person name="Lopez F."/>
            <person name="Lou Y."/>
            <person name="Martinez D."/>
            <person name="Medina C."/>
            <person name="Morgan J."/>
            <person name="Nandkeshwar R."/>
            <person name="Noonan J.P."/>
            <person name="Pitluck S."/>
            <person name="Pollard M."/>
            <person name="Predki P."/>
            <person name="Priest J."/>
            <person name="Ramirez L."/>
            <person name="Retterer J."/>
            <person name="Rodriguez A."/>
            <person name="Rogers S."/>
            <person name="Salamov A."/>
            <person name="Salazar A."/>
            <person name="Thayer N."/>
            <person name="Tice H."/>
            <person name="Tsai M."/>
            <person name="Ustaszewska A."/>
            <person name="Vo N."/>
            <person name="Wheeler J."/>
            <person name="Wu K."/>
            <person name="Yang J."/>
            <person name="Dickson M."/>
            <person name="Cheng J.-F."/>
            <person name="Eichler E.E."/>
            <person name="Olsen A."/>
            <person name="Pennacchio L.A."/>
            <person name="Rokhsar D.S."/>
            <person name="Richardson P."/>
            <person name="Lucas S.M."/>
            <person name="Myers R.M."/>
            <person name="Rubin E.M."/>
        </authorList>
    </citation>
    <scope>NUCLEOTIDE SEQUENCE [LARGE SCALE GENOMIC DNA]</scope>
</reference>
<reference key="6">
    <citation type="submission" date="2005-07" db="EMBL/GenBank/DDBJ databases">
        <authorList>
            <person name="Mural R.J."/>
            <person name="Istrail S."/>
            <person name="Sutton G.G."/>
            <person name="Florea L."/>
            <person name="Halpern A.L."/>
            <person name="Mobarry C.M."/>
            <person name="Lippert R."/>
            <person name="Walenz B."/>
            <person name="Shatkay H."/>
            <person name="Dew I."/>
            <person name="Miller J.R."/>
            <person name="Flanigan M.J."/>
            <person name="Edwards N.J."/>
            <person name="Bolanos R."/>
            <person name="Fasulo D."/>
            <person name="Halldorsson B.V."/>
            <person name="Hannenhalli S."/>
            <person name="Turner R."/>
            <person name="Yooseph S."/>
            <person name="Lu F."/>
            <person name="Nusskern D.R."/>
            <person name="Shue B.C."/>
            <person name="Zheng X.H."/>
            <person name="Zhong F."/>
            <person name="Delcher A.L."/>
            <person name="Huson D.H."/>
            <person name="Kravitz S.A."/>
            <person name="Mouchard L."/>
            <person name="Reinert K."/>
            <person name="Remington K.A."/>
            <person name="Clark A.G."/>
            <person name="Waterman M.S."/>
            <person name="Eichler E.E."/>
            <person name="Adams M.D."/>
            <person name="Hunkapiller M.W."/>
            <person name="Myers E.W."/>
            <person name="Venter J.C."/>
        </authorList>
    </citation>
    <scope>NUCLEOTIDE SEQUENCE [LARGE SCALE GENOMIC DNA]</scope>
</reference>
<reference key="7">
    <citation type="journal article" date="2004" name="Genome Res.">
        <title>The status, quality, and expansion of the NIH full-length cDNA project: the Mammalian Gene Collection (MGC).</title>
        <authorList>
            <consortium name="The MGC Project Team"/>
        </authorList>
    </citation>
    <scope>NUCLEOTIDE SEQUENCE [LARGE SCALE MRNA] (ISOFORMS 1 AND 2)</scope>
    <source>
        <tissue>Testis</tissue>
        <tissue>Uterus</tissue>
    </source>
</reference>
<reference key="8">
    <citation type="journal article" date="2005" name="Biochem. Biophys. Res. Commun.">
        <title>Mitochondrial targeting signals and mature peptides of 3-methylcrotonyl-CoA carboxylase.</title>
        <authorList>
            <person name="Stadler S.C."/>
            <person name="Polanetz R."/>
            <person name="Meier S."/>
            <person name="Mayerhofer P.U."/>
            <person name="Herrmann J.M."/>
            <person name="Anslinger K."/>
            <person name="Roscher A.A."/>
            <person name="Roschinger W."/>
            <person name="Holzinger A."/>
        </authorList>
    </citation>
    <scope>PROTEIN SEQUENCE OF 23-28</scope>
    <scope>SUBCELLULAR LOCATION</scope>
    <source>
        <tissue>Kidney</tissue>
    </source>
</reference>
<reference key="9">
    <citation type="journal article" date="2007" name="Protein Expr. Purif.">
        <title>Expression, purification, characterization of human 3-methylcrotonyl-CoA carboxylase (MCCC).</title>
        <authorList>
            <person name="Chu C.H."/>
            <person name="Cheng D."/>
        </authorList>
    </citation>
    <scope>FUNCTION</scope>
    <scope>CATALYTIC ACTIVITY</scope>
    <scope>BIOPHYSICOCHEMICAL PROPERTIES</scope>
    <scope>PATHWAY</scope>
</reference>
<reference key="10">
    <citation type="submission" date="1999-06" db="EMBL/GenBank/DDBJ databases">
        <authorList>
            <consortium name="The European IMAGE consortium"/>
        </authorList>
    </citation>
    <scope>NUCLEOTIDE SEQUENCE [LARGE SCALE MRNA] OF 469-563</scope>
</reference>
<reference key="11">
    <citation type="journal article" date="2011" name="BMC Syst. Biol.">
        <title>Initial characterization of the human central proteome.</title>
        <authorList>
            <person name="Burkard T.R."/>
            <person name="Planyavsky M."/>
            <person name="Kaupe I."/>
            <person name="Breitwieser F.P."/>
            <person name="Buerckstuemmer T."/>
            <person name="Bennett K.L."/>
            <person name="Superti-Furga G."/>
            <person name="Colinge J."/>
        </authorList>
    </citation>
    <scope>IDENTIFICATION BY MASS SPECTROMETRY [LARGE SCALE ANALYSIS]</scope>
</reference>
<reference key="12">
    <citation type="journal article" date="2014" name="J. Proteomics">
        <title>An enzyme assisted RP-RPLC approach for in-depth analysis of human liver phosphoproteome.</title>
        <authorList>
            <person name="Bian Y."/>
            <person name="Song C."/>
            <person name="Cheng K."/>
            <person name="Dong M."/>
            <person name="Wang F."/>
            <person name="Huang J."/>
            <person name="Sun D."/>
            <person name="Wang L."/>
            <person name="Ye M."/>
            <person name="Zou H."/>
        </authorList>
    </citation>
    <scope>IDENTIFICATION BY MASS SPECTROMETRY [LARGE SCALE ANALYSIS]</scope>
    <source>
        <tissue>Liver</tissue>
    </source>
</reference>
<reference key="13">
    <citation type="journal article" date="2015" name="Proteomics">
        <title>N-terminome analysis of the human mitochondrial proteome.</title>
        <authorList>
            <person name="Vaca Jacome A.S."/>
            <person name="Rabilloud T."/>
            <person name="Schaeffer-Reiss C."/>
            <person name="Rompais M."/>
            <person name="Ayoub D."/>
            <person name="Lane L."/>
            <person name="Bairoch A."/>
            <person name="Van Dorsselaer A."/>
            <person name="Carapito C."/>
        </authorList>
    </citation>
    <scope>IDENTIFICATION BY MASS SPECTROMETRY [LARGE SCALE ANALYSIS]</scope>
</reference>
<reference key="14">
    <citation type="journal article" date="2003" name="Mol. Genet. Metab.">
        <title>Functional analysis of MCCA and MCCB mutations causing methylcrotonylglycinuria.</title>
        <authorList>
            <person name="Desviat L.R."/>
            <person name="Perez-Cerda C."/>
            <person name="Perez B."/>
            <person name="Esparza-Gordillo J."/>
            <person name="Rodriguez-Pombo P."/>
            <person name="Penalva M.A."/>
            <person name="Rodriguez De Cordoba S."/>
            <person name="Ugarte M."/>
        </authorList>
    </citation>
    <scope>VARIANT MCC2D VAL-437</scope>
</reference>
<reference key="15">
    <citation type="journal article" date="2007" name="J. Hum. Genet.">
        <title>Novel mutations in five Japanese patients with 3-methylcrotonyl-CoA carboxylase deficiency.</title>
        <authorList>
            <person name="Uematsu M."/>
            <person name="Sakamoto O."/>
            <person name="Sugawara N."/>
            <person name="Kumagai N."/>
            <person name="Morimoto T."/>
            <person name="Yamaguchi S."/>
            <person name="Hasegawa Y."/>
            <person name="Kobayashi H."/>
            <person name="Ihara K."/>
            <person name="Yoshino M."/>
            <person name="Watanabe Y."/>
            <person name="Inokuchi T."/>
            <person name="Yokoyama T."/>
            <person name="Kiwaki K."/>
            <person name="Nakamura K."/>
            <person name="Endo F."/>
            <person name="Tsuchiya S."/>
            <person name="Ohura T."/>
        </authorList>
    </citation>
    <scope>VARIANTS MCC2D ARG-190; VAL-218 AND TYR-280</scope>
</reference>
<reference key="16">
    <citation type="journal article" date="2005" name="Hum. Mutat.">
        <title>3-Methylcrotonyl-CoA carboxylase deficiency: mutation analysis in 28 probands, 9 symptomatic and 19 detected by newborn screening.</title>
        <authorList>
            <person name="Dantas M.F."/>
            <person name="Suormala T."/>
            <person name="Randolph A."/>
            <person name="Coelho D."/>
            <person name="Fowler B."/>
            <person name="Valle D."/>
            <person name="Baumgartner M.R."/>
        </authorList>
    </citation>
    <scope>VARIANTS MCC2D GLN-99; TRP-155; GLN-155; TYR-190; THR-268; ARG-282; ARG-310; PHE-375 AND VAL-456</scope>
    <scope>CHARACTERIZATION OF VARIANTS TYR-190 AND ARG-352</scope>
</reference>
<reference key="17">
    <citation type="journal article" date="2011" name="Mol. Genet. Metab.">
        <title>Novel mutations in the human MCCA and MCCB gene causing methylcrotonylglycinuria.</title>
        <authorList>
            <person name="Nguyen K.V."/>
            <person name="Naviaux R.K."/>
            <person name="Patra S."/>
            <person name="Barshop B.A."/>
            <person name="Nyhan W.L."/>
        </authorList>
    </citation>
    <scope>VARIANTS MCC2D PHE-355; ARG-477; ARG-517 AND SER-520</scope>
</reference>
<reference key="18">
    <citation type="journal article" date="2012" name="Clin. Genet.">
        <title>Mutational spectrum in eight Korean patients with 3-methylcrotonyl-CoA carboxylase deficiency.</title>
        <authorList>
            <person name="Cho S.Y."/>
            <person name="Park H.D."/>
            <person name="Lee Y.W."/>
            <person name="Ki C.S."/>
            <person name="Lee S.Y."/>
            <person name="Sohn Y.B."/>
            <person name="Park S.W."/>
            <person name="Kim S.H."/>
            <person name="Ji S."/>
            <person name="Kim S.J."/>
            <person name="Choi E.W."/>
            <person name="Kim C.H."/>
            <person name="Ko A.R."/>
            <person name="Paik K.H."/>
            <person name="Lee D.H."/>
            <person name="Jin D.K."/>
        </authorList>
    </citation>
    <scope>VARIANTS MCC2D TYR-280 AND SER-459</scope>
</reference>
<reference key="19">
    <citation type="journal article" date="2012" name="Mol. Genet. Metab.">
        <title>A single mutation in MCCC1 or MCCC2 as a potential cause of positive screening for 3-methylcrotonyl-CoA carboxylase deficiency.</title>
        <authorList>
            <person name="Morscher R.J."/>
            <person name="Grunert S.C."/>
            <person name="Burer C."/>
            <person name="Burda P."/>
            <person name="Suormala T."/>
            <person name="Fowler B."/>
            <person name="Baumgartner M.R."/>
        </authorList>
    </citation>
    <scope>VARIANTS MCC2D VAL-218; MET-339 AND GLY-523</scope>
</reference>
<reference key="20">
    <citation type="journal article" date="2012" name="Orphanet J. Rare Dis.">
        <title>3-methylcrotonyl-CoA carboxylase deficiency: clinical, biochemical, enzymatic and molecular studies in 88 individuals.</title>
        <authorList>
            <person name="Gruenert S.C."/>
            <person name="Stucki M."/>
            <person name="Morscher R.J."/>
            <person name="Suormala T."/>
            <person name="Buerer C."/>
            <person name="Burda P."/>
            <person name="Christensen E."/>
            <person name="Ficicioglu C."/>
            <person name="Herwig J."/>
            <person name="Koelker S."/>
            <person name="Moeslinger D."/>
            <person name="Pasquini E."/>
            <person name="Santer R."/>
            <person name="Schwab K.O."/>
            <person name="Wilcken B."/>
            <person name="Fowler B."/>
            <person name="Yue W.W."/>
            <person name="Baumgartner M.R."/>
        </authorList>
    </citation>
    <scope>VARIANTS MCC2D PHE-39; GLN-99; PHE-101; GLY-118 DEL; PHE-131; ASN-146; THR-152; TRP-155; ARG-167; ASP-169; LEU-173; ARG-190; TYR-190; CYS-193; HIS-193; ASN-200; THR-218; VAL-218; GLU-220; LEU-224; ASP-237; LEU-266; TYR-280; ARG-282; ARG-310; MET-339; VAL-340; ARG-352; PHE-355; PHE-375; THR-403; LEU-434; VAL-456; ARG-475; ARG-477; ARG-517; SER-520; GLY-523 AND GLU-555</scope>
    <scope>CHARACTERIZATION OF VARIANTS MCC2D PHE-39; GLY-118 DEL; ASN-146; ARG-282; LEU-434; VAL-456; ARG-475 AND GLY-523</scope>
</reference>
<reference key="21">
    <citation type="journal article" date="2015" name="Clin. Genet.">
        <title>Identification of eight novel mutations and transcript analysis of two splicing mutations in Chinese newborns with MCC deficiency.</title>
        <authorList>
            <person name="Yang L."/>
            <person name="Yang J."/>
            <person name="Zhang T."/>
            <person name="Weng C."/>
            <person name="Hong F."/>
            <person name="Tong F."/>
            <person name="Yang R."/>
            <person name="Yin X."/>
            <person name="Yu P."/>
            <person name="Huang X."/>
            <person name="Qi M."/>
        </authorList>
    </citation>
    <scope>VARIANTS MCC2D ILE-139 AND ARG-319</scope>
</reference>
<reference key="22">
    <citation type="journal article" date="2016" name="Gene">
        <title>3-Methylcrotonyl-CoA carboxylase deficiency: Mutational spectrum derived from comprehensive newborn screening.</title>
        <authorList>
            <person name="Fonseca H."/>
            <person name="Azevedo L."/>
            <person name="Serrano C."/>
            <person name="Sousa C."/>
            <person name="Marcao A."/>
            <person name="Vilarinho L."/>
        </authorList>
    </citation>
    <scope>VARIANTS MCC2D VAL-68; ARG-105; TRP-155; ASP-163; ASN-200; ALA-214; TRP-216; THR-218; ASP-230; CYS-318; MET-339; VAL-387; PRO-393; ARG-410; ASP-410; THR-441; VAL-461; ARG-475 AND THR-524</scope>
</reference>
<dbReference type="EC" id="6.4.1.4" evidence="12"/>
<dbReference type="EMBL" id="AB050049">
    <property type="protein sequence ID" value="BAB16880.1"/>
    <property type="molecule type" value="mRNA"/>
</dbReference>
<dbReference type="EMBL" id="AB050050">
    <property type="protein sequence ID" value="BAB41121.1"/>
    <property type="molecule type" value="Genomic_DNA"/>
</dbReference>
<dbReference type="EMBL" id="AF310971">
    <property type="protein sequence ID" value="AAG53094.1"/>
    <property type="molecule type" value="mRNA"/>
</dbReference>
<dbReference type="EMBL" id="AF301000">
    <property type="protein sequence ID" value="AAK16404.1"/>
    <property type="molecule type" value="mRNA"/>
</dbReference>
<dbReference type="EMBL" id="AF261884">
    <property type="protein sequence ID" value="AAK49409.1"/>
    <property type="molecule type" value="mRNA"/>
</dbReference>
<dbReference type="EMBL" id="AC138832">
    <property type="status" value="NOT_ANNOTATED_CDS"/>
    <property type="molecule type" value="Genomic_DNA"/>
</dbReference>
<dbReference type="EMBL" id="CH471084">
    <property type="protein sequence ID" value="EAW95693.1"/>
    <property type="molecule type" value="Genomic_DNA"/>
</dbReference>
<dbReference type="EMBL" id="BC014897">
    <property type="protein sequence ID" value="AAH14897.1"/>
    <property type="status" value="ALT_FRAME"/>
    <property type="molecule type" value="mRNA"/>
</dbReference>
<dbReference type="EMBL" id="BC065027">
    <property type="protein sequence ID" value="AAH65027.1"/>
    <property type="molecule type" value="mRNA"/>
</dbReference>
<dbReference type="EMBL" id="AL079298">
    <property type="protein sequence ID" value="CAB45194.1"/>
    <property type="molecule type" value="mRNA"/>
</dbReference>
<dbReference type="CCDS" id="CCDS34184.1">
    <molecule id="Q9HCC0-1"/>
</dbReference>
<dbReference type="CCDS" id="CCDS93731.1">
    <molecule id="Q9HCC0-2"/>
</dbReference>
<dbReference type="RefSeq" id="NP_001350076.1">
    <molecule id="Q9HCC0-2"/>
    <property type="nucleotide sequence ID" value="NM_001363147.1"/>
</dbReference>
<dbReference type="RefSeq" id="NP_071415.1">
    <molecule id="Q9HCC0-1"/>
    <property type="nucleotide sequence ID" value="NM_022132.5"/>
</dbReference>
<dbReference type="RefSeq" id="XP_005248624.1">
    <property type="nucleotide sequence ID" value="XM_005248567.1"/>
</dbReference>
<dbReference type="PDB" id="8J4Z">
    <property type="method" value="EM"/>
    <property type="resolution" value="2.73 A"/>
    <property type="chains" value="A/C/F/H/J/K=1-563"/>
</dbReference>
<dbReference type="PDB" id="8J73">
    <property type="method" value="EM"/>
    <property type="resolution" value="4.16 A"/>
    <property type="chains" value="G/H/I/J/K/L/M/N/O/P/Q/R=1-563"/>
</dbReference>
<dbReference type="PDB" id="8J78">
    <property type="method" value="EM"/>
    <property type="resolution" value="3.88 A"/>
    <property type="chains" value="A/D/F/H/J/L=1-563"/>
</dbReference>
<dbReference type="PDB" id="8J7D">
    <property type="method" value="EM"/>
    <property type="resolution" value="2.70 A"/>
    <property type="chains" value="B/C/E/G/J/K=1-563"/>
</dbReference>
<dbReference type="PDB" id="8J99">
    <property type="method" value="EM"/>
    <property type="resolution" value="2.87 A"/>
    <property type="chains" value="B/D/G/H/J/L=1-563"/>
</dbReference>
<dbReference type="PDB" id="8JAK">
    <property type="method" value="EM"/>
    <property type="resolution" value="2.52 A"/>
    <property type="chains" value="B/D/E/H/J/L=1-563"/>
</dbReference>
<dbReference type="PDB" id="8JAW">
    <property type="method" value="EM"/>
    <property type="resolution" value="2.51 A"/>
    <property type="chains" value="B/D/G/I/J/L=1-563"/>
</dbReference>
<dbReference type="PDB" id="8JXL">
    <property type="method" value="EM"/>
    <property type="resolution" value="2.98 A"/>
    <property type="chains" value="A/B/D/G/I/K=1-563"/>
</dbReference>
<dbReference type="PDB" id="8JXM">
    <property type="method" value="EM"/>
    <property type="resolution" value="3.49 A"/>
    <property type="chains" value="A/C/E/H/J/K=1-563"/>
</dbReference>
<dbReference type="PDB" id="8JXN">
    <property type="method" value="EM"/>
    <property type="resolution" value="3.20 A"/>
    <property type="chains" value="A/B/D/G/I/K=1-563"/>
</dbReference>
<dbReference type="PDB" id="8K2V">
    <property type="method" value="EM"/>
    <property type="resolution" value="3.52 A"/>
    <property type="chains" value="G/H/I/J/K/L=1-563"/>
</dbReference>
<dbReference type="PDB" id="8XL6">
    <property type="method" value="EM"/>
    <property type="resolution" value="2.29 A"/>
    <property type="chains" value="B/D/F/H/J/L=1-563"/>
</dbReference>
<dbReference type="PDB" id="8XL7">
    <property type="method" value="EM"/>
    <property type="resolution" value="2.85 A"/>
    <property type="chains" value="B/D/F/H/J/L=1-563"/>
</dbReference>
<dbReference type="PDB" id="8XL8">
    <property type="method" value="EM"/>
    <property type="resolution" value="2.36 A"/>
    <property type="chains" value="B/D/F/H/J/L=1-563"/>
</dbReference>
<dbReference type="PDBsum" id="8J4Z"/>
<dbReference type="PDBsum" id="8J73"/>
<dbReference type="PDBsum" id="8J78"/>
<dbReference type="PDBsum" id="8J7D"/>
<dbReference type="PDBsum" id="8J99"/>
<dbReference type="PDBsum" id="8JAK"/>
<dbReference type="PDBsum" id="8JAW"/>
<dbReference type="PDBsum" id="8JXL"/>
<dbReference type="PDBsum" id="8JXM"/>
<dbReference type="PDBsum" id="8JXN"/>
<dbReference type="PDBsum" id="8K2V"/>
<dbReference type="PDBsum" id="8XL6"/>
<dbReference type="PDBsum" id="8XL7"/>
<dbReference type="PDBsum" id="8XL8"/>
<dbReference type="EMDB" id="EMD-35980"/>
<dbReference type="EMDB" id="EMD-36024"/>
<dbReference type="EMDB" id="EMD-36034"/>
<dbReference type="EMDB" id="EMD-36038"/>
<dbReference type="EMDB" id="EMD-36092"/>
<dbReference type="EMDB" id="EMD-36128"/>
<dbReference type="EMDB" id="EMD-36136"/>
<dbReference type="EMDB" id="EMD-36704"/>
<dbReference type="EMDB" id="EMD-36705"/>
<dbReference type="EMDB" id="EMD-36706"/>
<dbReference type="EMDB" id="EMD-36840"/>
<dbReference type="EMDB" id="EMD-38439"/>
<dbReference type="EMDB" id="EMD-38440"/>
<dbReference type="EMDB" id="EMD-38441"/>
<dbReference type="SMR" id="Q9HCC0"/>
<dbReference type="BioGRID" id="122050">
    <property type="interactions" value="172"/>
</dbReference>
<dbReference type="ComplexPortal" id="CPX-6236">
    <property type="entry name" value="Methylcrotonyl-CoA carboxylase complex"/>
</dbReference>
<dbReference type="CORUM" id="Q9HCC0"/>
<dbReference type="FunCoup" id="Q9HCC0">
    <property type="interactions" value="1419"/>
</dbReference>
<dbReference type="IntAct" id="Q9HCC0">
    <property type="interactions" value="59"/>
</dbReference>
<dbReference type="MINT" id="Q9HCC0"/>
<dbReference type="STRING" id="9606.ENSP00000343657"/>
<dbReference type="DrugBank" id="DB00121">
    <property type="generic name" value="Biotin"/>
</dbReference>
<dbReference type="GlyGen" id="Q9HCC0">
    <property type="glycosylation" value="1 site, 1 O-linked glycan (1 site)"/>
</dbReference>
<dbReference type="iPTMnet" id="Q9HCC0"/>
<dbReference type="PhosphoSitePlus" id="Q9HCC0"/>
<dbReference type="SwissPalm" id="Q9HCC0"/>
<dbReference type="BioMuta" id="MCCC2"/>
<dbReference type="DMDM" id="20138731"/>
<dbReference type="REPRODUCTION-2DPAGE" id="IPI00784044"/>
<dbReference type="CPTAC" id="CPTAC-405"/>
<dbReference type="CPTAC" id="CPTAC-406"/>
<dbReference type="jPOST" id="Q9HCC0"/>
<dbReference type="MassIVE" id="Q9HCC0"/>
<dbReference type="PaxDb" id="9606-ENSP00000343657"/>
<dbReference type="PeptideAtlas" id="Q9HCC0"/>
<dbReference type="ProteomicsDB" id="81665">
    <molecule id="Q9HCC0-1"/>
</dbReference>
<dbReference type="ProteomicsDB" id="81666">
    <molecule id="Q9HCC0-2"/>
</dbReference>
<dbReference type="Pumba" id="Q9HCC0"/>
<dbReference type="Antibodypedia" id="24162">
    <property type="antibodies" value="275 antibodies from 30 providers"/>
</dbReference>
<dbReference type="DNASU" id="64087"/>
<dbReference type="Ensembl" id="ENST00000340941.11">
    <molecule id="Q9HCC0-1"/>
    <property type="protein sequence ID" value="ENSP00000343657.6"/>
    <property type="gene ID" value="ENSG00000131844.17"/>
</dbReference>
<dbReference type="Ensembl" id="ENST00000683789.1">
    <molecule id="Q9HCC0-2"/>
    <property type="protein sequence ID" value="ENSP00000507012.1"/>
    <property type="gene ID" value="ENSG00000131844.17"/>
</dbReference>
<dbReference type="GeneID" id="64087"/>
<dbReference type="KEGG" id="hsa:64087"/>
<dbReference type="MANE-Select" id="ENST00000340941.11">
    <property type="protein sequence ID" value="ENSP00000343657.6"/>
    <property type="RefSeq nucleotide sequence ID" value="NM_022132.5"/>
    <property type="RefSeq protein sequence ID" value="NP_071415.1"/>
</dbReference>
<dbReference type="UCSC" id="uc003kbs.5">
    <molecule id="Q9HCC0-1"/>
    <property type="organism name" value="human"/>
</dbReference>
<dbReference type="AGR" id="HGNC:6937"/>
<dbReference type="CTD" id="64087"/>
<dbReference type="DisGeNET" id="64087"/>
<dbReference type="GeneCards" id="MCCC2"/>
<dbReference type="HGNC" id="HGNC:6937">
    <property type="gene designation" value="MCCC2"/>
</dbReference>
<dbReference type="HPA" id="ENSG00000131844">
    <property type="expression patterns" value="Tissue enhanced (liver)"/>
</dbReference>
<dbReference type="MalaCards" id="MCCC2"/>
<dbReference type="MIM" id="210210">
    <property type="type" value="phenotype"/>
</dbReference>
<dbReference type="MIM" id="609014">
    <property type="type" value="gene"/>
</dbReference>
<dbReference type="neXtProt" id="NX_Q9HCC0"/>
<dbReference type="OpenTargets" id="ENSG00000131844"/>
<dbReference type="Orphanet" id="6">
    <property type="disease" value="3-methylcrotonyl-CoA carboxylase deficiency"/>
</dbReference>
<dbReference type="PharmGKB" id="PA30681"/>
<dbReference type="VEuPathDB" id="HostDB:ENSG00000131844"/>
<dbReference type="eggNOG" id="KOG0540">
    <property type="taxonomic scope" value="Eukaryota"/>
</dbReference>
<dbReference type="GeneTree" id="ENSGT00940000155949"/>
<dbReference type="HOGENOM" id="CLU_018822_0_1_1"/>
<dbReference type="InParanoid" id="Q9HCC0"/>
<dbReference type="OMA" id="GATTHCE"/>
<dbReference type="OrthoDB" id="439921at2759"/>
<dbReference type="PAN-GO" id="Q9HCC0">
    <property type="GO annotations" value="4 GO annotations based on evolutionary models"/>
</dbReference>
<dbReference type="PhylomeDB" id="Q9HCC0"/>
<dbReference type="TreeFam" id="TF300446"/>
<dbReference type="BioCyc" id="MetaCyc:ENSG00000131844-MONOMER"/>
<dbReference type="PathwayCommons" id="Q9HCC0"/>
<dbReference type="Reactome" id="R-HSA-196780">
    <property type="pathway name" value="Biotin transport and metabolism"/>
</dbReference>
<dbReference type="Reactome" id="R-HSA-3371599">
    <property type="pathway name" value="Defective HLCS causes multiple carboxylase deficiency"/>
</dbReference>
<dbReference type="Reactome" id="R-HSA-70895">
    <property type="pathway name" value="Branched-chain amino acid catabolism"/>
</dbReference>
<dbReference type="Reactome" id="R-HSA-9909438">
    <property type="pathway name" value="3-Methylcrotonyl-CoA carboxylase deficiency"/>
</dbReference>
<dbReference type="SignaLink" id="Q9HCC0"/>
<dbReference type="UniPathway" id="UPA00363">
    <property type="reaction ID" value="UER00861"/>
</dbReference>
<dbReference type="BioGRID-ORCS" id="64087">
    <property type="hits" value="13 hits in 1170 CRISPR screens"/>
</dbReference>
<dbReference type="CD-CODE" id="DEE660B4">
    <property type="entry name" value="Stress granule"/>
</dbReference>
<dbReference type="CD-CODE" id="FB4E32DD">
    <property type="entry name" value="Presynaptic clusters and postsynaptic densities"/>
</dbReference>
<dbReference type="ChiTaRS" id="MCCC2">
    <property type="organism name" value="human"/>
</dbReference>
<dbReference type="GenomeRNAi" id="64087"/>
<dbReference type="Pharos" id="Q9HCC0">
    <property type="development level" value="Tbio"/>
</dbReference>
<dbReference type="PRO" id="PR:Q9HCC0"/>
<dbReference type="Proteomes" id="UP000005640">
    <property type="component" value="Chromosome 5"/>
</dbReference>
<dbReference type="RNAct" id="Q9HCC0">
    <property type="molecule type" value="protein"/>
</dbReference>
<dbReference type="Bgee" id="ENSG00000131844">
    <property type="expression patterns" value="Expressed in left ventricle myocardium and 181 other cell types or tissues"/>
</dbReference>
<dbReference type="ExpressionAtlas" id="Q9HCC0">
    <property type="expression patterns" value="baseline and differential"/>
</dbReference>
<dbReference type="GO" id="GO:0005829">
    <property type="term" value="C:cytosol"/>
    <property type="evidence" value="ECO:0000304"/>
    <property type="project" value="Reactome"/>
</dbReference>
<dbReference type="GO" id="GO:1905202">
    <property type="term" value="C:methylcrotonoyl-CoA carboxylase complex"/>
    <property type="evidence" value="ECO:0000314"/>
    <property type="project" value="ParkinsonsUK-UCL"/>
</dbReference>
<dbReference type="GO" id="GO:0005759">
    <property type="term" value="C:mitochondrial matrix"/>
    <property type="evidence" value="ECO:0000314"/>
    <property type="project" value="ParkinsonsUK-UCL"/>
</dbReference>
<dbReference type="GO" id="GO:0005739">
    <property type="term" value="C:mitochondrion"/>
    <property type="evidence" value="ECO:0000314"/>
    <property type="project" value="ParkinsonsUK-UCL"/>
</dbReference>
<dbReference type="GO" id="GO:0005524">
    <property type="term" value="F:ATP binding"/>
    <property type="evidence" value="ECO:0007669"/>
    <property type="project" value="UniProtKB-KW"/>
</dbReference>
<dbReference type="GO" id="GO:0004485">
    <property type="term" value="F:methylcrotonoyl-CoA carboxylase activity"/>
    <property type="evidence" value="ECO:0007669"/>
    <property type="project" value="UniProtKB-EC"/>
</dbReference>
<dbReference type="GO" id="GO:0009083">
    <property type="term" value="P:branched-chain amino acid catabolic process"/>
    <property type="evidence" value="ECO:0000303"/>
    <property type="project" value="ComplexPortal"/>
</dbReference>
<dbReference type="GO" id="GO:0015936">
    <property type="term" value="P:coenzyme A metabolic process"/>
    <property type="evidence" value="ECO:0007669"/>
    <property type="project" value="Ensembl"/>
</dbReference>
<dbReference type="GO" id="GO:0006552">
    <property type="term" value="P:L-leucine catabolic process"/>
    <property type="evidence" value="ECO:0000318"/>
    <property type="project" value="GO_Central"/>
</dbReference>
<dbReference type="FunFam" id="3.90.226.10:FF:000004">
    <property type="entry name" value="Methylcrotonoyl-CoA carboxylase beta chain"/>
    <property type="match status" value="1"/>
</dbReference>
<dbReference type="FunFam" id="3.90.226.10:FF:000007">
    <property type="entry name" value="Methylcrotonoyl-CoA carboxylase subunit beta"/>
    <property type="match status" value="1"/>
</dbReference>
<dbReference type="Gene3D" id="3.90.226.10">
    <property type="entry name" value="2-enoyl-CoA Hydratase, Chain A, domain 1"/>
    <property type="match status" value="2"/>
</dbReference>
<dbReference type="InterPro" id="IPR034733">
    <property type="entry name" value="AcCoA_carboxyl_beta"/>
</dbReference>
<dbReference type="InterPro" id="IPR029045">
    <property type="entry name" value="ClpP/crotonase-like_dom_sf"/>
</dbReference>
<dbReference type="InterPro" id="IPR011763">
    <property type="entry name" value="COA_CT_C"/>
</dbReference>
<dbReference type="InterPro" id="IPR011762">
    <property type="entry name" value="COA_CT_N"/>
</dbReference>
<dbReference type="InterPro" id="IPR045190">
    <property type="entry name" value="MCCB/AccD1-like"/>
</dbReference>
<dbReference type="PANTHER" id="PTHR22855">
    <property type="entry name" value="ACETYL, PROPIONYL, PYRUVATE, AND GLUTACONYL CARBOXYLASE-RELATED"/>
    <property type="match status" value="1"/>
</dbReference>
<dbReference type="PANTHER" id="PTHR22855:SF13">
    <property type="entry name" value="METHYLCROTONOYL-COA CARBOXYLASE BETA CHAIN, MITOCHONDRIAL"/>
    <property type="match status" value="1"/>
</dbReference>
<dbReference type="Pfam" id="PF01039">
    <property type="entry name" value="Carboxyl_trans"/>
    <property type="match status" value="1"/>
</dbReference>
<dbReference type="SUPFAM" id="SSF52096">
    <property type="entry name" value="ClpP/crotonase"/>
    <property type="match status" value="2"/>
</dbReference>
<dbReference type="PROSITE" id="PS50989">
    <property type="entry name" value="COA_CT_CTER"/>
    <property type="match status" value="1"/>
</dbReference>
<dbReference type="PROSITE" id="PS50980">
    <property type="entry name" value="COA_CT_NTER"/>
    <property type="match status" value="1"/>
</dbReference>
<sequence>MWAVLRLALRPCARASPAGPRAYHGDSVASLGTQPDLGSALYQENYKQMKALVNQLHERVEHIKLGGGEKARALHISRGKLLPRERIDNLIDPGSPFLELSQFAGYQLYDNEEVPGGGIITGIGRVSGVECMIIANDATVKGGAYYPVTVKKQLRAQEIAMQNRLPCIYLVDSGGAYLPRQADVFPDRDHFGRTFYNQAIMSSKNIAQIAVVMGSCTAGGAYVPAMADENIIVRKQGTIFLAGPPLVKAATGEEVSAEDLGGADLHCRKSGVSDHWALDDHHALHLTRKVVRNLNYQKKLDVTIEPSEEPLFPADELYGIVGANLKRSFDVREVIARIVDGSRFTEFKAFYGDTLVTGFARIFGYPVGIVGNNGVLFSESAKKGTHFVQLCCQRNIPLLFLQNITGFMVGREYEAEGIAKDGAKMVAAVACAQVPKITLIIGGSYGAGNYGMCGRAYSPRFLYIWPNARISVMGGEQAANVLATITKDQRAREGKQFSSADEAALKEPIIKKFEEEGNPYYSSARVWDDGIIDPADTRLVLGLSFSAALNAPIEKTDFGIFRM</sequence>
<name>MCCB_HUMAN</name>
<evidence type="ECO:0000250" key="1">
    <source>
        <dbReference type="UniProtKB" id="Q3ULD5"/>
    </source>
</evidence>
<evidence type="ECO:0000255" key="2"/>
<evidence type="ECO:0000255" key="3">
    <source>
        <dbReference type="PROSITE-ProRule" id="PRU01136"/>
    </source>
</evidence>
<evidence type="ECO:0000255" key="4">
    <source>
        <dbReference type="PROSITE-ProRule" id="PRU01137"/>
    </source>
</evidence>
<evidence type="ECO:0000255" key="5">
    <source>
        <dbReference type="PROSITE-ProRule" id="PRU01138"/>
    </source>
</evidence>
<evidence type="ECO:0000269" key="6">
    <source>
    </source>
</evidence>
<evidence type="ECO:0000269" key="7">
    <source>
    </source>
</evidence>
<evidence type="ECO:0000269" key="8">
    <source>
    </source>
</evidence>
<evidence type="ECO:0000269" key="9">
    <source>
    </source>
</evidence>
<evidence type="ECO:0000269" key="10">
    <source>
    </source>
</evidence>
<evidence type="ECO:0000269" key="11">
    <source>
    </source>
</evidence>
<evidence type="ECO:0000269" key="12">
    <source>
    </source>
</evidence>
<evidence type="ECO:0000269" key="13">
    <source>
    </source>
</evidence>
<evidence type="ECO:0000269" key="14">
    <source>
    </source>
</evidence>
<evidence type="ECO:0000269" key="15">
    <source>
    </source>
</evidence>
<evidence type="ECO:0000269" key="16">
    <source>
    </source>
</evidence>
<evidence type="ECO:0000269" key="17">
    <source>
    </source>
</evidence>
<evidence type="ECO:0000269" key="18">
    <source>
    </source>
</evidence>
<evidence type="ECO:0000269" key="19">
    <source>
    </source>
</evidence>
<evidence type="ECO:0000303" key="20">
    <source>
    </source>
</evidence>
<evidence type="ECO:0000305" key="21"/>
<evidence type="ECO:0007829" key="22">
    <source>
        <dbReference type="PDB" id="8JAW"/>
    </source>
</evidence>
<evidence type="ECO:0007829" key="23">
    <source>
        <dbReference type="PDB" id="8JXN"/>
    </source>
</evidence>
<evidence type="ECO:0007829" key="24">
    <source>
        <dbReference type="PDB" id="8XL6"/>
    </source>
</evidence>
<evidence type="ECO:0007829" key="25">
    <source>
        <dbReference type="PDB" id="8XL8"/>
    </source>
</evidence>
<proteinExistence type="evidence at protein level"/>
<protein>
    <recommendedName>
        <fullName>Methylcrotonoyl-CoA carboxylase beta chain, mitochondrial</fullName>
        <shortName>MCCase subunit beta</shortName>
        <ecNumber evidence="12">6.4.1.4</ecNumber>
    </recommendedName>
    <alternativeName>
        <fullName>3-methylcrotonyl-CoA carboxylase 2</fullName>
    </alternativeName>
    <alternativeName>
        <fullName>3-methylcrotonyl-CoA carboxylase non-biotin-containing subunit</fullName>
    </alternativeName>
    <alternativeName>
        <fullName>3-methylcrotonyl-CoA:carbon dioxide ligase subunit beta</fullName>
    </alternativeName>
</protein>
<keyword id="KW-0002">3D-structure</keyword>
<keyword id="KW-0007">Acetylation</keyword>
<keyword id="KW-0025">Alternative splicing</keyword>
<keyword id="KW-0067">ATP-binding</keyword>
<keyword id="KW-0903">Direct protein sequencing</keyword>
<keyword id="KW-0225">Disease variant</keyword>
<keyword id="KW-0436">Ligase</keyword>
<keyword id="KW-0496">Mitochondrion</keyword>
<keyword id="KW-0547">Nucleotide-binding</keyword>
<keyword id="KW-1267">Proteomics identification</keyword>
<keyword id="KW-1185">Reference proteome</keyword>
<keyword id="KW-0809">Transit peptide</keyword>
<comment type="function">
    <text evidence="12">Carboxyltransferase subunit of the 3-methylcrotonyl-CoA carboxylase, an enzyme that catalyzes the conversion of 3-methylcrotonyl-CoA to 3-methylglutaconyl-CoA, a critical step for leucine and isovaleric acid catabolism.</text>
</comment>
<comment type="catalytic activity">
    <reaction evidence="12">
        <text>3-methylbut-2-enoyl-CoA + hydrogencarbonate + ATP = 3-methyl-(2E)-glutaconyl-CoA + ADP + phosphate + H(+)</text>
        <dbReference type="Rhea" id="RHEA:13589"/>
        <dbReference type="ChEBI" id="CHEBI:15378"/>
        <dbReference type="ChEBI" id="CHEBI:17544"/>
        <dbReference type="ChEBI" id="CHEBI:30616"/>
        <dbReference type="ChEBI" id="CHEBI:43474"/>
        <dbReference type="ChEBI" id="CHEBI:57344"/>
        <dbReference type="ChEBI" id="CHEBI:57346"/>
        <dbReference type="ChEBI" id="CHEBI:456216"/>
        <dbReference type="EC" id="6.4.1.4"/>
    </reaction>
</comment>
<comment type="biophysicochemical properties">
    <kinetics>
        <KM evidence="12">45 uM for ATP</KM>
        <KM evidence="12">74 uM for 3-methylcrotonyl-CoA</KM>
        <text>kcat is 4.0 sec(-1).</text>
    </kinetics>
</comment>
<comment type="pathway">
    <text evidence="12">Amino-acid degradation; L-leucine degradation; (S)-3-hydroxy-3-methylglutaryl-CoA from 3-isovaleryl-CoA: step 2/3.</text>
</comment>
<comment type="subunit">
    <text>Probably a dodecamer composed of six biotin-containing alpha subunits (MCCC1) and six beta (MCCC2) subunits.</text>
</comment>
<comment type="interaction">
    <interactant intactId="EBI-2211296">
        <id>Q9HCC0</id>
    </interactant>
    <interactant intactId="EBI-349854">
        <id>P13569</id>
        <label>CFTR</label>
    </interactant>
    <organismsDiffer>false</organismsDiffer>
    <experiments>5</experiments>
</comment>
<comment type="interaction">
    <interactant intactId="EBI-2211296">
        <id>Q9HCC0</id>
    </interactant>
    <interactant intactId="EBI-2211703">
        <id>Q96RQ3</id>
        <label>MCCC1</label>
    </interactant>
    <organismsDiffer>false</organismsDiffer>
    <experiments>7</experiments>
</comment>
<comment type="subcellular location">
    <subcellularLocation>
        <location evidence="6 11">Mitochondrion matrix</location>
    </subcellularLocation>
</comment>
<comment type="alternative products">
    <event type="alternative splicing"/>
    <isoform>
        <id>Q9HCC0-1</id>
        <name>1</name>
        <sequence type="displayed"/>
    </isoform>
    <isoform>
        <id>Q9HCC0-2</id>
        <name>2</name>
        <sequence type="described" ref="VSP_000069"/>
    </isoform>
</comment>
<comment type="disease" evidence="6 7 8 9 10 13 14 15 16 17 18 19">
    <disease id="DI-00743">
        <name>3-methylcrotonoyl-CoA carboxylase 2 deficiency</name>
        <acronym>MCC2D</acronym>
        <description>An autosomal recessive disorder of leucine catabolism. The phenotype is variable, ranging from neonatal onset with severe neurological involvement to asymptomatic adults. There is a characteristic organic aciduria with massive excretion of 3-hydroxyisovaleric acid and 3-methylcrotonylglycine, usually in combination with a severe secondary carnitine deficiency.</description>
        <dbReference type="MIM" id="210210"/>
    </disease>
    <text>The disease is caused by variants affecting the gene represented in this entry.</text>
</comment>
<comment type="similarity">
    <text evidence="21">Belongs to the AccD/PCCB family.</text>
</comment>
<comment type="sequence caution" evidence="21">
    <conflict type="frameshift">
        <sequence resource="EMBL-CDS" id="AAH14897"/>
    </conflict>
</comment>